<feature type="chain" id="PRO_0000293137" description="tRNA-specific adenosine deaminase">
    <location>
        <begin position="1"/>
        <end position="144"/>
    </location>
</feature>
<feature type="domain" description="CMP/dCMP-type deaminase" evidence="2">
    <location>
        <begin position="1"/>
        <end position="116"/>
    </location>
</feature>
<feature type="active site" description="Proton donor" evidence="1">
    <location>
        <position position="50"/>
    </location>
</feature>
<feature type="binding site" evidence="1">
    <location>
        <position position="48"/>
    </location>
    <ligand>
        <name>Zn(2+)</name>
        <dbReference type="ChEBI" id="CHEBI:29105"/>
        <note>catalytic</note>
    </ligand>
</feature>
<feature type="binding site" evidence="1">
    <location>
        <position position="78"/>
    </location>
    <ligand>
        <name>Zn(2+)</name>
        <dbReference type="ChEBI" id="CHEBI:29105"/>
        <note>catalytic</note>
    </ligand>
</feature>
<feature type="binding site" evidence="1">
    <location>
        <position position="81"/>
    </location>
    <ligand>
        <name>Zn(2+)</name>
        <dbReference type="ChEBI" id="CHEBI:29105"/>
        <note>catalytic</note>
    </ligand>
</feature>
<protein>
    <recommendedName>
        <fullName evidence="1">tRNA-specific adenosine deaminase</fullName>
        <ecNumber evidence="1">3.5.4.33</ecNumber>
    </recommendedName>
</protein>
<dbReference type="EC" id="3.5.4.33" evidence="1"/>
<dbReference type="EMBL" id="CP000053">
    <property type="protein sequence ID" value="AAY62170.1"/>
    <property type="status" value="ALT_INIT"/>
    <property type="molecule type" value="Genomic_DNA"/>
</dbReference>
<dbReference type="SMR" id="Q4UJW9"/>
<dbReference type="STRING" id="315456.RF_1319"/>
<dbReference type="KEGG" id="rfe:RF_1319"/>
<dbReference type="eggNOG" id="COG0590">
    <property type="taxonomic scope" value="Bacteria"/>
</dbReference>
<dbReference type="HOGENOM" id="CLU_025810_3_2_5"/>
<dbReference type="Proteomes" id="UP000008548">
    <property type="component" value="Chromosome"/>
</dbReference>
<dbReference type="GO" id="GO:0052717">
    <property type="term" value="F:tRNA-specific adenosine-34 deaminase activity"/>
    <property type="evidence" value="ECO:0007669"/>
    <property type="project" value="UniProtKB-UniRule"/>
</dbReference>
<dbReference type="GO" id="GO:0008270">
    <property type="term" value="F:zinc ion binding"/>
    <property type="evidence" value="ECO:0007669"/>
    <property type="project" value="UniProtKB-UniRule"/>
</dbReference>
<dbReference type="GO" id="GO:0002100">
    <property type="term" value="P:tRNA wobble adenosine to inosine editing"/>
    <property type="evidence" value="ECO:0007669"/>
    <property type="project" value="UniProtKB-UniRule"/>
</dbReference>
<dbReference type="CDD" id="cd01285">
    <property type="entry name" value="nucleoside_deaminase"/>
    <property type="match status" value="1"/>
</dbReference>
<dbReference type="Gene3D" id="3.40.140.10">
    <property type="entry name" value="Cytidine Deaminase, domain 2"/>
    <property type="match status" value="1"/>
</dbReference>
<dbReference type="HAMAP" id="MF_00972">
    <property type="entry name" value="tRNA_aden_deaminase"/>
    <property type="match status" value="1"/>
</dbReference>
<dbReference type="InterPro" id="IPR016192">
    <property type="entry name" value="APOBEC/CMP_deaminase_Zn-bd"/>
</dbReference>
<dbReference type="InterPro" id="IPR002125">
    <property type="entry name" value="CMP_dCMP_dom"/>
</dbReference>
<dbReference type="InterPro" id="IPR016193">
    <property type="entry name" value="Cytidine_deaminase-like"/>
</dbReference>
<dbReference type="InterPro" id="IPR028883">
    <property type="entry name" value="tRNA_aden_deaminase"/>
</dbReference>
<dbReference type="PANTHER" id="PTHR11079">
    <property type="entry name" value="CYTOSINE DEAMINASE FAMILY MEMBER"/>
    <property type="match status" value="1"/>
</dbReference>
<dbReference type="PANTHER" id="PTHR11079:SF179">
    <property type="entry name" value="TRNA(ADENINE(34)) DEAMINASE, CHLOROPLASTIC"/>
    <property type="match status" value="1"/>
</dbReference>
<dbReference type="Pfam" id="PF14437">
    <property type="entry name" value="MafB19-deam"/>
    <property type="match status" value="1"/>
</dbReference>
<dbReference type="SUPFAM" id="SSF53927">
    <property type="entry name" value="Cytidine deaminase-like"/>
    <property type="match status" value="1"/>
</dbReference>
<dbReference type="PROSITE" id="PS00903">
    <property type="entry name" value="CYT_DCMP_DEAMINASES_1"/>
    <property type="match status" value="1"/>
</dbReference>
<dbReference type="PROSITE" id="PS51747">
    <property type="entry name" value="CYT_DCMP_DEAMINASES_2"/>
    <property type="match status" value="1"/>
</dbReference>
<gene>
    <name evidence="1" type="primary">tadA</name>
    <name type="ordered locus">RF_1319</name>
</gene>
<comment type="function">
    <text evidence="1">Catalyzes the deamination of adenosine to inosine at the wobble position 34 of tRNA(Arg2).</text>
</comment>
<comment type="catalytic activity">
    <reaction evidence="1">
        <text>adenosine(34) in tRNA + H2O + H(+) = inosine(34) in tRNA + NH4(+)</text>
        <dbReference type="Rhea" id="RHEA:43168"/>
        <dbReference type="Rhea" id="RHEA-COMP:10373"/>
        <dbReference type="Rhea" id="RHEA-COMP:10374"/>
        <dbReference type="ChEBI" id="CHEBI:15377"/>
        <dbReference type="ChEBI" id="CHEBI:15378"/>
        <dbReference type="ChEBI" id="CHEBI:28938"/>
        <dbReference type="ChEBI" id="CHEBI:74411"/>
        <dbReference type="ChEBI" id="CHEBI:82852"/>
        <dbReference type="EC" id="3.5.4.33"/>
    </reaction>
</comment>
<comment type="cofactor">
    <cofactor evidence="1">
        <name>Zn(2+)</name>
        <dbReference type="ChEBI" id="CHEBI:29105"/>
    </cofactor>
    <text evidence="1">Binds 1 zinc ion per subunit.</text>
</comment>
<comment type="subunit">
    <text evidence="1">Homodimer.</text>
</comment>
<comment type="similarity">
    <text evidence="1">Belongs to the cytidine and deoxycytidylate deaminase family.</text>
</comment>
<comment type="sequence caution" evidence="3">
    <conflict type="erroneous initiation">
        <sequence resource="EMBL-CDS" id="AAY62170"/>
    </conflict>
    <text>Extended N-terminus.</text>
</comment>
<name>TADA_RICFE</name>
<organism>
    <name type="scientific">Rickettsia felis (strain ATCC VR-1525 / URRWXCal2)</name>
    <name type="common">Rickettsia azadi</name>
    <dbReference type="NCBI Taxonomy" id="315456"/>
    <lineage>
        <taxon>Bacteria</taxon>
        <taxon>Pseudomonadati</taxon>
        <taxon>Pseudomonadota</taxon>
        <taxon>Alphaproteobacteria</taxon>
        <taxon>Rickettsiales</taxon>
        <taxon>Rickettsiaceae</taxon>
        <taxon>Rickettsieae</taxon>
        <taxon>Rickettsia</taxon>
        <taxon>spotted fever group</taxon>
    </lineage>
</organism>
<proteinExistence type="inferred from homology"/>
<accession>Q4UJW9</accession>
<evidence type="ECO:0000255" key="1">
    <source>
        <dbReference type="HAMAP-Rule" id="MF_00972"/>
    </source>
</evidence>
<evidence type="ECO:0000255" key="2">
    <source>
        <dbReference type="PROSITE-ProRule" id="PRU01083"/>
    </source>
</evidence>
<evidence type="ECO:0000305" key="3"/>
<sequence>MEQALKQAGIAFDKNEVPVGAVIVDRLNQKIIVSSHNNTEEKNNALYHAEIIAINEACNLISSKNLNDYDIYVTLEPCAMCAAAIAHSRLKRLFYGASDSKHGAVESNLRYFNSSVCFYRPEIYSGILAEDSRLLMKEFFKRIR</sequence>
<reference key="1">
    <citation type="journal article" date="2005" name="PLoS Biol.">
        <title>The genome sequence of Rickettsia felis identifies the first putative conjugative plasmid in an obligate intracellular parasite.</title>
        <authorList>
            <person name="Ogata H."/>
            <person name="Renesto P."/>
            <person name="Audic S."/>
            <person name="Robert C."/>
            <person name="Blanc G."/>
            <person name="Fournier P.-E."/>
            <person name="Parinello H."/>
            <person name="Claverie J.-M."/>
            <person name="Raoult D."/>
        </authorList>
    </citation>
    <scope>NUCLEOTIDE SEQUENCE [LARGE SCALE GENOMIC DNA]</scope>
    <source>
        <strain>ATCC VR-1525 / URRWXCal2</strain>
    </source>
</reference>
<keyword id="KW-0378">Hydrolase</keyword>
<keyword id="KW-0479">Metal-binding</keyword>
<keyword id="KW-0819">tRNA processing</keyword>
<keyword id="KW-0862">Zinc</keyword>